<dbReference type="EC" id="3.4.11.1" evidence="1"/>
<dbReference type="EC" id="3.4.11.10" evidence="1"/>
<dbReference type="EMBL" id="AE015925">
    <property type="protein sequence ID" value="AAP05157.1"/>
    <property type="molecule type" value="Genomic_DNA"/>
</dbReference>
<dbReference type="RefSeq" id="WP_011006373.1">
    <property type="nucleotide sequence ID" value="NC_003361.3"/>
</dbReference>
<dbReference type="SMR" id="Q823J9"/>
<dbReference type="STRING" id="227941.CCA_00411"/>
<dbReference type="KEGG" id="cca:CCA_00411"/>
<dbReference type="eggNOG" id="COG0260">
    <property type="taxonomic scope" value="Bacteria"/>
</dbReference>
<dbReference type="HOGENOM" id="CLU_013734_2_2_0"/>
<dbReference type="OrthoDB" id="9809354at2"/>
<dbReference type="Proteomes" id="UP000002193">
    <property type="component" value="Chromosome"/>
</dbReference>
<dbReference type="GO" id="GO:0005737">
    <property type="term" value="C:cytoplasm"/>
    <property type="evidence" value="ECO:0007669"/>
    <property type="project" value="UniProtKB-SubCell"/>
</dbReference>
<dbReference type="GO" id="GO:0030145">
    <property type="term" value="F:manganese ion binding"/>
    <property type="evidence" value="ECO:0007669"/>
    <property type="project" value="UniProtKB-UniRule"/>
</dbReference>
<dbReference type="GO" id="GO:0070006">
    <property type="term" value="F:metalloaminopeptidase activity"/>
    <property type="evidence" value="ECO:0007669"/>
    <property type="project" value="InterPro"/>
</dbReference>
<dbReference type="GO" id="GO:0006508">
    <property type="term" value="P:proteolysis"/>
    <property type="evidence" value="ECO:0007669"/>
    <property type="project" value="UniProtKB-KW"/>
</dbReference>
<dbReference type="CDD" id="cd00433">
    <property type="entry name" value="Peptidase_M17"/>
    <property type="match status" value="1"/>
</dbReference>
<dbReference type="Gene3D" id="3.40.220.10">
    <property type="entry name" value="Leucine Aminopeptidase, subunit E, domain 1"/>
    <property type="match status" value="1"/>
</dbReference>
<dbReference type="Gene3D" id="3.40.630.10">
    <property type="entry name" value="Zn peptidases"/>
    <property type="match status" value="1"/>
</dbReference>
<dbReference type="HAMAP" id="MF_00181">
    <property type="entry name" value="Cytosol_peptidase_M17"/>
    <property type="match status" value="1"/>
</dbReference>
<dbReference type="InterPro" id="IPR011356">
    <property type="entry name" value="Leucine_aapep/pepB"/>
</dbReference>
<dbReference type="InterPro" id="IPR043472">
    <property type="entry name" value="Macro_dom-like"/>
</dbReference>
<dbReference type="InterPro" id="IPR000819">
    <property type="entry name" value="Peptidase_M17_C"/>
</dbReference>
<dbReference type="InterPro" id="IPR023042">
    <property type="entry name" value="Peptidase_M17_leu_NH2_pept"/>
</dbReference>
<dbReference type="InterPro" id="IPR008283">
    <property type="entry name" value="Peptidase_M17_N"/>
</dbReference>
<dbReference type="NCBIfam" id="NF002074">
    <property type="entry name" value="PRK00913.1-4"/>
    <property type="match status" value="1"/>
</dbReference>
<dbReference type="NCBIfam" id="NF002078">
    <property type="entry name" value="PRK00913.2-5"/>
    <property type="match status" value="1"/>
</dbReference>
<dbReference type="NCBIfam" id="NF002083">
    <property type="entry name" value="PRK00913.3-5"/>
    <property type="match status" value="1"/>
</dbReference>
<dbReference type="PANTHER" id="PTHR11963:SF23">
    <property type="entry name" value="CYTOSOL AMINOPEPTIDASE"/>
    <property type="match status" value="1"/>
</dbReference>
<dbReference type="PANTHER" id="PTHR11963">
    <property type="entry name" value="LEUCINE AMINOPEPTIDASE-RELATED"/>
    <property type="match status" value="1"/>
</dbReference>
<dbReference type="Pfam" id="PF00883">
    <property type="entry name" value="Peptidase_M17"/>
    <property type="match status" value="1"/>
</dbReference>
<dbReference type="Pfam" id="PF02789">
    <property type="entry name" value="Peptidase_M17_N"/>
    <property type="match status" value="1"/>
</dbReference>
<dbReference type="PRINTS" id="PR00481">
    <property type="entry name" value="LAMNOPPTDASE"/>
</dbReference>
<dbReference type="SUPFAM" id="SSF52949">
    <property type="entry name" value="Macro domain-like"/>
    <property type="match status" value="1"/>
</dbReference>
<dbReference type="SUPFAM" id="SSF53187">
    <property type="entry name" value="Zn-dependent exopeptidases"/>
    <property type="match status" value="1"/>
</dbReference>
<dbReference type="PROSITE" id="PS00631">
    <property type="entry name" value="CYTOSOL_AP"/>
    <property type="match status" value="1"/>
</dbReference>
<evidence type="ECO:0000255" key="1">
    <source>
        <dbReference type="HAMAP-Rule" id="MF_00181"/>
    </source>
</evidence>
<keyword id="KW-0031">Aminopeptidase</keyword>
<keyword id="KW-0963">Cytoplasm</keyword>
<keyword id="KW-0378">Hydrolase</keyword>
<keyword id="KW-0464">Manganese</keyword>
<keyword id="KW-0479">Metal-binding</keyword>
<keyword id="KW-0645">Protease</keyword>
<name>AMPA_CHLCV</name>
<accession>Q823J9</accession>
<feature type="chain" id="PRO_0000165737" description="Probable cytosol aminopeptidase">
    <location>
        <begin position="1"/>
        <end position="499"/>
    </location>
</feature>
<feature type="active site" evidence="1">
    <location>
        <position position="275"/>
    </location>
</feature>
<feature type="active site" evidence="1">
    <location>
        <position position="349"/>
    </location>
</feature>
<feature type="binding site" evidence="1">
    <location>
        <position position="263"/>
    </location>
    <ligand>
        <name>Mn(2+)</name>
        <dbReference type="ChEBI" id="CHEBI:29035"/>
        <label>2</label>
    </ligand>
</feature>
<feature type="binding site" evidence="1">
    <location>
        <position position="268"/>
    </location>
    <ligand>
        <name>Mn(2+)</name>
        <dbReference type="ChEBI" id="CHEBI:29035"/>
        <label>1</label>
    </ligand>
</feature>
<feature type="binding site" evidence="1">
    <location>
        <position position="268"/>
    </location>
    <ligand>
        <name>Mn(2+)</name>
        <dbReference type="ChEBI" id="CHEBI:29035"/>
        <label>2</label>
    </ligand>
</feature>
<feature type="binding site" evidence="1">
    <location>
        <position position="286"/>
    </location>
    <ligand>
        <name>Mn(2+)</name>
        <dbReference type="ChEBI" id="CHEBI:29035"/>
        <label>2</label>
    </ligand>
</feature>
<feature type="binding site" evidence="1">
    <location>
        <position position="345"/>
    </location>
    <ligand>
        <name>Mn(2+)</name>
        <dbReference type="ChEBI" id="CHEBI:29035"/>
        <label>1</label>
    </ligand>
</feature>
<feature type="binding site" evidence="1">
    <location>
        <position position="347"/>
    </location>
    <ligand>
        <name>Mn(2+)</name>
        <dbReference type="ChEBI" id="CHEBI:29035"/>
        <label>1</label>
    </ligand>
</feature>
<feature type="binding site" evidence="1">
    <location>
        <position position="347"/>
    </location>
    <ligand>
        <name>Mn(2+)</name>
        <dbReference type="ChEBI" id="CHEBI:29035"/>
        <label>2</label>
    </ligand>
</feature>
<comment type="function">
    <text evidence="1">Presumably involved in the processing and regular turnover of intracellular proteins. Catalyzes the removal of unsubstituted N-terminal amino acids from various peptides.</text>
</comment>
<comment type="catalytic activity">
    <reaction evidence="1">
        <text>Release of an N-terminal amino acid, Xaa-|-Yaa-, in which Xaa is preferably Leu, but may be other amino acids including Pro although not Arg or Lys, and Yaa may be Pro. Amino acid amides and methyl esters are also readily hydrolyzed, but rates on arylamides are exceedingly low.</text>
        <dbReference type="EC" id="3.4.11.1"/>
    </reaction>
</comment>
<comment type="catalytic activity">
    <reaction evidence="1">
        <text>Release of an N-terminal amino acid, preferentially leucine, but not glutamic or aspartic acids.</text>
        <dbReference type="EC" id="3.4.11.10"/>
    </reaction>
</comment>
<comment type="cofactor">
    <cofactor evidence="1">
        <name>Mn(2+)</name>
        <dbReference type="ChEBI" id="CHEBI:29035"/>
    </cofactor>
    <text evidence="1">Binds 2 manganese ions per subunit.</text>
</comment>
<comment type="subcellular location">
    <subcellularLocation>
        <location evidence="1">Cytoplasm</location>
    </subcellularLocation>
</comment>
<comment type="similarity">
    <text evidence="1">Belongs to the peptidase M17 family.</text>
</comment>
<gene>
    <name evidence="1" type="primary">pepA</name>
    <name type="ordered locus">CCA_00411</name>
</gene>
<proteinExistence type="inferred from homology"/>
<protein>
    <recommendedName>
        <fullName evidence="1">Probable cytosol aminopeptidase</fullName>
        <ecNumber evidence="1">3.4.11.1</ecNumber>
    </recommendedName>
    <alternativeName>
        <fullName evidence="1">Leucine aminopeptidase</fullName>
        <shortName evidence="1">LAP</shortName>
        <ecNumber evidence="1">3.4.11.10</ecNumber>
    </alternativeName>
    <alternativeName>
        <fullName evidence="1">Leucyl aminopeptidase</fullName>
    </alternativeName>
</protein>
<reference key="1">
    <citation type="journal article" date="2003" name="Nucleic Acids Res.">
        <title>Genome sequence of Chlamydophila caviae (Chlamydia psittaci GPIC): examining the role of niche-specific genes in the evolution of the Chlamydiaceae.</title>
        <authorList>
            <person name="Read T.D."/>
            <person name="Myers G.S.A."/>
            <person name="Brunham R.C."/>
            <person name="Nelson W.C."/>
            <person name="Paulsen I.T."/>
            <person name="Heidelberg J.F."/>
            <person name="Holtzapple E.K."/>
            <person name="Khouri H.M."/>
            <person name="Federova N.B."/>
            <person name="Carty H.A."/>
            <person name="Umayam L.A."/>
            <person name="Haft D.H."/>
            <person name="Peterson J.D."/>
            <person name="Beanan M.J."/>
            <person name="White O."/>
            <person name="Salzberg S.L."/>
            <person name="Hsia R.-C."/>
            <person name="McClarty G."/>
            <person name="Rank R.G."/>
            <person name="Bavoil P.M."/>
            <person name="Fraser C.M."/>
        </authorList>
    </citation>
    <scope>NUCLEOTIDE SEQUENCE [LARGE SCALE GENOMIC DNA]</scope>
    <source>
        <strain>ATCC VR-813 / DSM 19441 / 03DC25 / GPIC</strain>
    </source>
</reference>
<organism>
    <name type="scientific">Chlamydia caviae (strain ATCC VR-813 / DSM 19441 / 03DC25 / GPIC)</name>
    <name type="common">Chlamydophila caviae</name>
    <dbReference type="NCBI Taxonomy" id="227941"/>
    <lineage>
        <taxon>Bacteria</taxon>
        <taxon>Pseudomonadati</taxon>
        <taxon>Chlamydiota</taxon>
        <taxon>Chlamydiia</taxon>
        <taxon>Chlamydiales</taxon>
        <taxon>Chlamydiaceae</taxon>
        <taxon>Chlamydia/Chlamydophila group</taxon>
        <taxon>Chlamydia</taxon>
    </lineage>
</organism>
<sequence length="499" mass="54363">MVLFHSQASCSKRIEADAIILPFWKLKDKVKCAASIAKEYESLYQVALDNFSAKSREVELIYSCGQGKEKRIVLLGLGKNEELSSQEVLEAYAKATRLLRKAKCTTVNVVLPTISELRISIEDFLTNLTSGILSLNYNYPKYTKESSNDPLLTKVNVLGIVPKIADRIFRKEENIFEGVYLTRDLVNGNADEVTPQKLANIAKGMAKEFPSMDVKILNKDAILKEKMGLLAAVAKGSAVDPCFIVLTYQGKPKSKDHTVLIGKGVTFDSGGLDLKPGKAMLTMKEDMAGAATVLGILSGIAALELPVNVTAIVPATENAIDAAAYKMGDVYTGMSGLSVEIGSTDAEGRLILADAITYALKYCNPTRIIDFATLTGAMVVSLGEDVAGFFSNNDVLAQDLSEASAETSEALWRLPLVEKYNKALHSDIADMKNIGSNRAGAITAALFLKRFLEDQPVAWAHLDIAGTAYREKDEDLYPKYASGFGVRCLIYYIEKFLSK</sequence>